<name>SYSC_HUMAN</name>
<protein>
    <recommendedName>
        <fullName>Serine--tRNA ligase, cytoplasmic</fullName>
        <ecNumber evidence="4 5 7 8 14 16 17">6.1.1.11</ecNumber>
    </recommendedName>
    <alternativeName>
        <fullName>Seryl-tRNA synthetase</fullName>
        <shortName>SerRS</shortName>
    </alternativeName>
    <alternativeName>
        <fullName>Seryl-tRNA(Ser/Sec) synthetase</fullName>
    </alternativeName>
</protein>
<evidence type="ECO:0000256" key="1">
    <source>
        <dbReference type="SAM" id="MobiDB-lite"/>
    </source>
</evidence>
<evidence type="ECO:0000269" key="2">
    <source>
    </source>
</evidence>
<evidence type="ECO:0000269" key="3">
    <source>
    </source>
</evidence>
<evidence type="ECO:0000269" key="4">
    <source>
    </source>
</evidence>
<evidence type="ECO:0000269" key="5">
    <source>
    </source>
</evidence>
<evidence type="ECO:0000269" key="6">
    <source>
    </source>
</evidence>
<evidence type="ECO:0000269" key="7">
    <source>
    </source>
</evidence>
<evidence type="ECO:0000269" key="8">
    <source>
    </source>
</evidence>
<evidence type="ECO:0000269" key="9">
    <source>
    </source>
</evidence>
<evidence type="ECO:0000269" key="10">
    <source>
    </source>
</evidence>
<evidence type="ECO:0000269" key="11">
    <source>
    </source>
</evidence>
<evidence type="ECO:0000269" key="12">
    <source>
    </source>
</evidence>
<evidence type="ECO:0000269" key="13">
    <source>
    </source>
</evidence>
<evidence type="ECO:0000269" key="14">
    <source>
    </source>
</evidence>
<evidence type="ECO:0000305" key="15"/>
<evidence type="ECO:0000305" key="16">
    <source>
    </source>
</evidence>
<evidence type="ECO:0000305" key="17">
    <source>
    </source>
</evidence>
<evidence type="ECO:0000312" key="18">
    <source>
        <dbReference type="HGNC" id="HGNC:10537"/>
    </source>
</evidence>
<evidence type="ECO:0007744" key="19">
    <source>
        <dbReference type="PDB" id="3VBB"/>
    </source>
</evidence>
<evidence type="ECO:0007744" key="20">
    <source>
        <dbReference type="PDB" id="4L87"/>
    </source>
</evidence>
<evidence type="ECO:0007744" key="21">
    <source>
        <dbReference type="PDB" id="4RQE"/>
    </source>
</evidence>
<evidence type="ECO:0007744" key="22">
    <source>
        <dbReference type="PDB" id="4RQF"/>
    </source>
</evidence>
<evidence type="ECO:0007744" key="23">
    <source>
    </source>
</evidence>
<evidence type="ECO:0007744" key="24">
    <source>
    </source>
</evidence>
<evidence type="ECO:0007744" key="25">
    <source>
    </source>
</evidence>
<evidence type="ECO:0007829" key="26">
    <source>
        <dbReference type="PDB" id="3VBB"/>
    </source>
</evidence>
<evidence type="ECO:0007829" key="27">
    <source>
        <dbReference type="PDB" id="4L87"/>
    </source>
</evidence>
<evidence type="ECO:0007829" key="28">
    <source>
        <dbReference type="PDB" id="8P7B"/>
    </source>
</evidence>
<accession>P49591</accession>
<accession>B2R6Y9</accession>
<accession>Q5T5C8</accession>
<accession>Q9NSE3</accession>
<feature type="chain" id="PRO_0000122191" description="Serine--tRNA ligase, cytoplasmic">
    <location>
        <begin position="1"/>
        <end position="514"/>
    </location>
</feature>
<feature type="region of interest" description="Interaction with tRNA" evidence="7">
    <location>
        <begin position="9"/>
        <end position="61"/>
    </location>
</feature>
<feature type="region of interest" description="Disordered" evidence="1">
    <location>
        <begin position="473"/>
        <end position="514"/>
    </location>
</feature>
<feature type="short sequence motif" description="Nuclear localization signal" evidence="4">
    <location>
        <begin position="482"/>
        <end position="494"/>
    </location>
</feature>
<feature type="compositionally biased region" description="Basic and acidic residues" evidence="1">
    <location>
        <begin position="479"/>
        <end position="502"/>
    </location>
</feature>
<feature type="compositionally biased region" description="Polar residues" evidence="1">
    <location>
        <begin position="504"/>
        <end position="514"/>
    </location>
</feature>
<feature type="binding site" evidence="5 20">
    <location>
        <position position="271"/>
    </location>
    <ligand>
        <name>L-serine</name>
        <dbReference type="ChEBI" id="CHEBI:33384"/>
    </ligand>
</feature>
<feature type="binding site" evidence="5 7 20">
    <location>
        <begin position="302"/>
        <end position="304"/>
    </location>
    <ligand>
        <name>ATP</name>
        <dbReference type="ChEBI" id="CHEBI:30616"/>
    </ligand>
</feature>
<feature type="binding site" evidence="5 20">
    <location>
        <position position="302"/>
    </location>
    <ligand>
        <name>L-serine</name>
        <dbReference type="ChEBI" id="CHEBI:33384"/>
    </ligand>
</feature>
<feature type="binding site" evidence="5 7 20">
    <location>
        <begin position="318"/>
        <end position="321"/>
    </location>
    <ligand>
        <name>ATP</name>
        <dbReference type="ChEBI" id="CHEBI:30616"/>
    </ligand>
</feature>
<feature type="binding site" evidence="5 20">
    <location>
        <position position="325"/>
    </location>
    <ligand>
        <name>L-serine</name>
        <dbReference type="ChEBI" id="CHEBI:33384"/>
    </ligand>
</feature>
<feature type="binding site" evidence="5 7 20">
    <location>
        <begin position="391"/>
        <end position="394"/>
    </location>
    <ligand>
        <name>ATP</name>
        <dbReference type="ChEBI" id="CHEBI:30616"/>
    </ligand>
</feature>
<feature type="binding site" evidence="5 20">
    <location>
        <position position="427"/>
    </location>
    <ligand>
        <name>L-serine</name>
        <dbReference type="ChEBI" id="CHEBI:33384"/>
    </ligand>
</feature>
<feature type="site" description="Important for serine binding" evidence="8">
    <location>
        <position position="429"/>
    </location>
</feature>
<feature type="modified residue" description="N-acetylmethionine" evidence="24">
    <location>
        <position position="1"/>
    </location>
</feature>
<feature type="modified residue" description="Phosphoserine" evidence="23">
    <location>
        <position position="241"/>
    </location>
</feature>
<feature type="modified residue" description="N6-acetyllysine" evidence="25">
    <location>
        <position position="323"/>
    </location>
</feature>
<feature type="sequence variant" id="VAR_078434" description="In NEDMAS; impaired serine-activation of enzyme resulting in a significant decrease in the first step of the aminoacylation reaction; reduced protein stability; reduced protein expression; dbSNP:rs1553178049." evidence="8">
    <original>D</original>
    <variation>N</variation>
    <location>
        <position position="172"/>
    </location>
</feature>
<feature type="sequence variant" id="VAR_087457" description="In NEDMAS; reduced protein stability resulting in a significant decrease in cellular enzyme activity; dbSNP:rs539161490." evidence="11">
    <original>R</original>
    <variation>L</variation>
    <location>
        <position position="213"/>
    </location>
</feature>
<feature type="sequence variant" id="VAR_088480" description="In NEDMAS." evidence="12">
    <original>R</original>
    <variation>C</variation>
    <location>
        <position position="302"/>
    </location>
</feature>
<feature type="sequence variant" id="VAR_088481" description="In NEDMAS; dbSNP:rs750961565." evidence="12">
    <original>R</original>
    <variation>C</variation>
    <location>
        <position position="390"/>
    </location>
</feature>
<feature type="mutagenesis site" description="Abolishes DNA binding." evidence="6">
    <location>
        <begin position="2"/>
        <end position="14"/>
    </location>
</feature>
<feature type="mutagenesis site" description="Strongly decreased enzyme activity." evidence="7">
    <original>R</original>
    <variation>A</variation>
    <location>
        <position position="9"/>
    </location>
</feature>
<feature type="mutagenesis site" description="Abolishes enzyme activity." evidence="7">
    <original>R</original>
    <variation>A</variation>
    <location>
        <position position="44"/>
    </location>
</feature>
<feature type="mutagenesis site" description="Abolishes enzyme activity." evidence="7">
    <original>D</original>
    <variation>A</variation>
    <location>
        <position position="51"/>
    </location>
</feature>
<feature type="mutagenesis site" description="Strongly decreased enzyme activity." evidence="7">
    <original>N</original>
    <variation>A</variation>
    <location>
        <position position="54"/>
    </location>
</feature>
<feature type="mutagenesis site" description="Moderately decreased enzyme activity." evidence="7">
    <original>K</original>
    <variation>A</variation>
    <location>
        <position position="55"/>
    </location>
</feature>
<feature type="mutagenesis site" description="Moderately decreased enzyme activity." evidence="7">
    <original>N</original>
    <variation>A</variation>
    <location>
        <position position="58"/>
    </location>
</feature>
<feature type="mutagenesis site" description="Moderately decreased enzyme activity." evidence="7">
    <original>S</original>
    <variation>A</variation>
    <location>
        <position position="61"/>
    </location>
</feature>
<feature type="mutagenesis site" description="Decreased enzyme activity. Abolishes DNA binding." evidence="5 6">
    <location>
        <begin position="75"/>
        <end position="97"/>
    </location>
</feature>
<feature type="mutagenesis site" description="Moderately decreased enzyme activity." evidence="7">
    <original>K</original>
    <variation>A</variation>
    <location>
        <position position="104"/>
    </location>
</feature>
<feature type="mutagenesis site" description="Moderately decreased enzyme activity." evidence="7">
    <original>R</original>
    <variation>A</variation>
    <location>
        <position position="107"/>
    </location>
</feature>
<feature type="mutagenesis site" description="Mildly decreased enzyme activity. Nearly abolishes DNA binding." evidence="5 6">
    <location>
        <begin position="254"/>
        <end position="261"/>
    </location>
</feature>
<feature type="mutagenesis site" description="Retains nuclear location and abolishes enzyme activity; when associated with V-383." evidence="4">
    <original>D</original>
    <variation>R</variation>
    <location>
        <position position="378"/>
    </location>
</feature>
<feature type="mutagenesis site" description="Abolishes nuclear location. Decreases enzyme activity. Retains nuclear location and abolishes enzyme activity; when associated with R-378." evidence="4">
    <original>F</original>
    <variation>V</variation>
    <location>
        <position position="383"/>
    </location>
</feature>
<feature type="mutagenesis site" description="Abolishes DNA binding." evidence="6">
    <location>
        <begin position="413"/>
        <end position="420"/>
    </location>
</feature>
<feature type="mutagenesis site" description="Catalytically inactive. Loss of serine binding. No effect on nuclear location." evidence="4 8">
    <original>T</original>
    <variation>A</variation>
    <location>
        <position position="429"/>
    </location>
</feature>
<feature type="mutagenesis site" description="Abolishes nuclear localization." evidence="4">
    <location>
        <begin position="482"/>
        <end position="514"/>
    </location>
</feature>
<feature type="mutagenesis site" description="Abolishes nuclear localization; when associated with A-485 and A-493." evidence="4">
    <original>K</original>
    <variation>A</variation>
    <location>
        <position position="482"/>
    </location>
</feature>
<feature type="mutagenesis site" description="Abolishes nuclear localization; when associated with A-482 and A-493." evidence="4">
    <original>K</original>
    <variation>A</variation>
    <location>
        <position position="485"/>
    </location>
</feature>
<feature type="mutagenesis site" description="Abolishes nuclear localization; when associated with A-482 and A-485." evidence="4">
    <original>K</original>
    <variation>A</variation>
    <location>
        <position position="493"/>
    </location>
</feature>
<feature type="sequence conflict" description="In Ref. 1; CAA62635." evidence="15" ref="1">
    <original>N</original>
    <variation>S</variation>
    <location>
        <position position="54"/>
    </location>
</feature>
<feature type="sequence conflict" description="In Ref. 6; AAH09390." evidence="15" ref="6">
    <original>R</original>
    <variation>C</variation>
    <location>
        <position position="435"/>
    </location>
</feature>
<feature type="helix" evidence="28">
    <location>
        <begin position="5"/>
        <end position="7"/>
    </location>
</feature>
<feature type="turn" evidence="28">
    <location>
        <begin position="10"/>
        <end position="13"/>
    </location>
</feature>
<feature type="helix" evidence="28">
    <location>
        <begin position="16"/>
        <end position="25"/>
    </location>
</feature>
<feature type="helix" evidence="28">
    <location>
        <begin position="32"/>
        <end position="69"/>
    </location>
</feature>
<feature type="helix" evidence="26">
    <location>
        <begin position="82"/>
        <end position="84"/>
    </location>
</feature>
<feature type="strand" evidence="26">
    <location>
        <begin position="86"/>
        <end position="89"/>
    </location>
</feature>
<feature type="helix" evidence="28">
    <location>
        <begin position="92"/>
        <end position="95"/>
    </location>
</feature>
<feature type="helix" evidence="28">
    <location>
        <begin position="100"/>
        <end position="132"/>
    </location>
</feature>
<feature type="helix" evidence="28">
    <location>
        <begin position="149"/>
        <end position="152"/>
    </location>
</feature>
<feature type="strand" evidence="28">
    <location>
        <begin position="154"/>
        <end position="160"/>
    </location>
</feature>
<feature type="helix" evidence="28">
    <location>
        <begin position="170"/>
        <end position="176"/>
    </location>
</feature>
<feature type="strand" evidence="28">
    <location>
        <begin position="180"/>
        <end position="182"/>
    </location>
</feature>
<feature type="helix" evidence="28">
    <location>
        <begin position="183"/>
        <end position="188"/>
    </location>
</feature>
<feature type="strand" evidence="28">
    <location>
        <begin position="195"/>
        <end position="197"/>
    </location>
</feature>
<feature type="helix" evidence="28">
    <location>
        <begin position="199"/>
        <end position="218"/>
    </location>
</feature>
<feature type="strand" evidence="28">
    <location>
        <begin position="221"/>
        <end position="224"/>
    </location>
</feature>
<feature type="strand" evidence="28">
    <location>
        <begin position="227"/>
        <end position="230"/>
    </location>
</feature>
<feature type="helix" evidence="28">
    <location>
        <begin position="231"/>
        <end position="237"/>
    </location>
</feature>
<feature type="helix" evidence="28">
    <location>
        <begin position="240"/>
        <end position="245"/>
    </location>
</feature>
<feature type="strand" evidence="28">
    <location>
        <begin position="249"/>
        <end position="251"/>
    </location>
</feature>
<feature type="strand" evidence="27">
    <location>
        <begin position="254"/>
        <end position="256"/>
    </location>
</feature>
<feature type="strand" evidence="28">
    <location>
        <begin position="266"/>
        <end position="268"/>
    </location>
</feature>
<feature type="helix" evidence="28">
    <location>
        <begin position="273"/>
        <end position="277"/>
    </location>
</feature>
<feature type="helix" evidence="28">
    <location>
        <begin position="278"/>
        <end position="280"/>
    </location>
</feature>
<feature type="strand" evidence="27">
    <location>
        <begin position="283"/>
        <end position="285"/>
    </location>
</feature>
<feature type="turn" evidence="26">
    <location>
        <begin position="287"/>
        <end position="289"/>
    </location>
</feature>
<feature type="strand" evidence="28">
    <location>
        <begin position="292"/>
        <end position="301"/>
    </location>
</feature>
<feature type="helix" evidence="28">
    <location>
        <begin position="310"/>
        <end position="312"/>
    </location>
</feature>
<feature type="turn" evidence="28">
    <location>
        <begin position="313"/>
        <end position="316"/>
    </location>
</feature>
<feature type="strand" evidence="28">
    <location>
        <begin position="319"/>
        <end position="330"/>
    </location>
</feature>
<feature type="helix" evidence="28">
    <location>
        <begin position="336"/>
        <end position="354"/>
    </location>
</feature>
<feature type="strand" evidence="28">
    <location>
        <begin position="359"/>
        <end position="363"/>
    </location>
</feature>
<feature type="helix" evidence="28">
    <location>
        <begin position="366"/>
        <end position="368"/>
    </location>
</feature>
<feature type="strand" evidence="28">
    <location>
        <begin position="374"/>
        <end position="383"/>
    </location>
</feature>
<feature type="turn" evidence="28">
    <location>
        <begin position="384"/>
        <end position="387"/>
    </location>
</feature>
<feature type="strand" evidence="28">
    <location>
        <begin position="388"/>
        <end position="397"/>
    </location>
</feature>
<feature type="helix" evidence="28">
    <location>
        <begin position="401"/>
        <end position="406"/>
    </location>
</feature>
<feature type="strand" evidence="28">
    <location>
        <begin position="408"/>
        <end position="413"/>
    </location>
</feature>
<feature type="strand" evidence="28">
    <location>
        <begin position="416"/>
        <end position="418"/>
    </location>
</feature>
<feature type="strand" evidence="28">
    <location>
        <begin position="424"/>
        <end position="432"/>
    </location>
</feature>
<feature type="helix" evidence="28">
    <location>
        <begin position="433"/>
        <end position="444"/>
    </location>
</feature>
<feature type="strand" evidence="28">
    <location>
        <begin position="447"/>
        <end position="451"/>
    </location>
</feature>
<feature type="helix" evidence="28">
    <location>
        <begin position="454"/>
        <end position="456"/>
    </location>
</feature>
<feature type="strand" evidence="28">
    <location>
        <begin position="464"/>
        <end position="469"/>
    </location>
</feature>
<organism>
    <name type="scientific">Homo sapiens</name>
    <name type="common">Human</name>
    <dbReference type="NCBI Taxonomy" id="9606"/>
    <lineage>
        <taxon>Eukaryota</taxon>
        <taxon>Metazoa</taxon>
        <taxon>Chordata</taxon>
        <taxon>Craniata</taxon>
        <taxon>Vertebrata</taxon>
        <taxon>Euteleostomi</taxon>
        <taxon>Mammalia</taxon>
        <taxon>Eutheria</taxon>
        <taxon>Euarchontoglires</taxon>
        <taxon>Primates</taxon>
        <taxon>Haplorrhini</taxon>
        <taxon>Catarrhini</taxon>
        <taxon>Hominidae</taxon>
        <taxon>Homo</taxon>
    </lineage>
</organism>
<keyword id="KW-0002">3D-structure</keyword>
<keyword id="KW-0007">Acetylation</keyword>
<keyword id="KW-0030">Aminoacyl-tRNA synthetase</keyword>
<keyword id="KW-0067">ATP-binding</keyword>
<keyword id="KW-0963">Cytoplasm</keyword>
<keyword id="KW-0225">Disease variant</keyword>
<keyword id="KW-0238">DNA-binding</keyword>
<keyword id="KW-0887">Epilepsy</keyword>
<keyword id="KW-0991">Intellectual disability</keyword>
<keyword id="KW-0436">Ligase</keyword>
<keyword id="KW-0547">Nucleotide-binding</keyword>
<keyword id="KW-0539">Nucleus</keyword>
<keyword id="KW-0597">Phosphoprotein</keyword>
<keyword id="KW-0648">Protein biosynthesis</keyword>
<keyword id="KW-1267">Proteomics identification</keyword>
<keyword id="KW-1185">Reference proteome</keyword>
<keyword id="KW-0804">Transcription</keyword>
<keyword id="KW-0805">Transcription regulation</keyword>
<proteinExistence type="evidence at protein level"/>
<gene>
    <name evidence="18" type="primary">SARS1</name>
    <name type="synonym">SARS</name>
    <name type="synonym">SERS</name>
</gene>
<reference key="1">
    <citation type="journal article" date="1997" name="Eur. J. Biochem.">
        <title>Genomic organization, cDNA sequence, bacterial expression, and purification of human seryl-tRNA synthase.</title>
        <authorList>
            <person name="Vincent C."/>
            <person name="Tarbouriech N."/>
            <person name="Haertlein M."/>
        </authorList>
    </citation>
    <scope>NUCLEOTIDE SEQUENCE [MRNA]</scope>
    <scope>FUNCTION</scope>
    <scope>CATALYTIC ACTIVITY</scope>
    <source>
        <tissue>Brain</tissue>
    </source>
</reference>
<reference key="2">
    <citation type="submission" date="1995-03" db="EMBL/GenBank/DDBJ databases">
        <title>Isolation and characterization of human seryl-tRNA synthetase cDNA.</title>
        <authorList>
            <person name="Shiba K."/>
            <person name="Yu R."/>
            <person name="Motegi H."/>
            <person name="Martinis S."/>
            <person name="Noda T."/>
        </authorList>
    </citation>
    <scope>NUCLEOTIDE SEQUENCE [MRNA]</scope>
</reference>
<reference key="3">
    <citation type="journal article" date="2004" name="Nat. Genet.">
        <title>Complete sequencing and characterization of 21,243 full-length human cDNAs.</title>
        <authorList>
            <person name="Ota T."/>
            <person name="Suzuki Y."/>
            <person name="Nishikawa T."/>
            <person name="Otsuki T."/>
            <person name="Sugiyama T."/>
            <person name="Irie R."/>
            <person name="Wakamatsu A."/>
            <person name="Hayashi K."/>
            <person name="Sato H."/>
            <person name="Nagai K."/>
            <person name="Kimura K."/>
            <person name="Makita H."/>
            <person name="Sekine M."/>
            <person name="Obayashi M."/>
            <person name="Nishi T."/>
            <person name="Shibahara T."/>
            <person name="Tanaka T."/>
            <person name="Ishii S."/>
            <person name="Yamamoto J."/>
            <person name="Saito K."/>
            <person name="Kawai Y."/>
            <person name="Isono Y."/>
            <person name="Nakamura Y."/>
            <person name="Nagahari K."/>
            <person name="Murakami K."/>
            <person name="Yasuda T."/>
            <person name="Iwayanagi T."/>
            <person name="Wagatsuma M."/>
            <person name="Shiratori A."/>
            <person name="Sudo H."/>
            <person name="Hosoiri T."/>
            <person name="Kaku Y."/>
            <person name="Kodaira H."/>
            <person name="Kondo H."/>
            <person name="Sugawara M."/>
            <person name="Takahashi M."/>
            <person name="Kanda K."/>
            <person name="Yokoi T."/>
            <person name="Furuya T."/>
            <person name="Kikkawa E."/>
            <person name="Omura Y."/>
            <person name="Abe K."/>
            <person name="Kamihara K."/>
            <person name="Katsuta N."/>
            <person name="Sato K."/>
            <person name="Tanikawa M."/>
            <person name="Yamazaki M."/>
            <person name="Ninomiya K."/>
            <person name="Ishibashi T."/>
            <person name="Yamashita H."/>
            <person name="Murakawa K."/>
            <person name="Fujimori K."/>
            <person name="Tanai H."/>
            <person name="Kimata M."/>
            <person name="Watanabe M."/>
            <person name="Hiraoka S."/>
            <person name="Chiba Y."/>
            <person name="Ishida S."/>
            <person name="Ono Y."/>
            <person name="Takiguchi S."/>
            <person name="Watanabe S."/>
            <person name="Yosida M."/>
            <person name="Hotuta T."/>
            <person name="Kusano J."/>
            <person name="Kanehori K."/>
            <person name="Takahashi-Fujii A."/>
            <person name="Hara H."/>
            <person name="Tanase T.-O."/>
            <person name="Nomura Y."/>
            <person name="Togiya S."/>
            <person name="Komai F."/>
            <person name="Hara R."/>
            <person name="Takeuchi K."/>
            <person name="Arita M."/>
            <person name="Imose N."/>
            <person name="Musashino K."/>
            <person name="Yuuki H."/>
            <person name="Oshima A."/>
            <person name="Sasaki N."/>
            <person name="Aotsuka S."/>
            <person name="Yoshikawa Y."/>
            <person name="Matsunawa H."/>
            <person name="Ichihara T."/>
            <person name="Shiohata N."/>
            <person name="Sano S."/>
            <person name="Moriya S."/>
            <person name="Momiyama H."/>
            <person name="Satoh N."/>
            <person name="Takami S."/>
            <person name="Terashima Y."/>
            <person name="Suzuki O."/>
            <person name="Nakagawa S."/>
            <person name="Senoh A."/>
            <person name="Mizoguchi H."/>
            <person name="Goto Y."/>
            <person name="Shimizu F."/>
            <person name="Wakebe H."/>
            <person name="Hishigaki H."/>
            <person name="Watanabe T."/>
            <person name="Sugiyama A."/>
            <person name="Takemoto M."/>
            <person name="Kawakami B."/>
            <person name="Yamazaki M."/>
            <person name="Watanabe K."/>
            <person name="Kumagai A."/>
            <person name="Itakura S."/>
            <person name="Fukuzumi Y."/>
            <person name="Fujimori Y."/>
            <person name="Komiyama M."/>
            <person name="Tashiro H."/>
            <person name="Tanigami A."/>
            <person name="Fujiwara T."/>
            <person name="Ono T."/>
            <person name="Yamada K."/>
            <person name="Fujii Y."/>
            <person name="Ozaki K."/>
            <person name="Hirao M."/>
            <person name="Ohmori Y."/>
            <person name="Kawabata A."/>
            <person name="Hikiji T."/>
            <person name="Kobatake N."/>
            <person name="Inagaki H."/>
            <person name="Ikema Y."/>
            <person name="Okamoto S."/>
            <person name="Okitani R."/>
            <person name="Kawakami T."/>
            <person name="Noguchi S."/>
            <person name="Itoh T."/>
            <person name="Shigeta K."/>
            <person name="Senba T."/>
            <person name="Matsumura K."/>
            <person name="Nakajima Y."/>
            <person name="Mizuno T."/>
            <person name="Morinaga M."/>
            <person name="Sasaki M."/>
            <person name="Togashi T."/>
            <person name="Oyama M."/>
            <person name="Hata H."/>
            <person name="Watanabe M."/>
            <person name="Komatsu T."/>
            <person name="Mizushima-Sugano J."/>
            <person name="Satoh T."/>
            <person name="Shirai Y."/>
            <person name="Takahashi Y."/>
            <person name="Nakagawa K."/>
            <person name="Okumura K."/>
            <person name="Nagase T."/>
            <person name="Nomura N."/>
            <person name="Kikuchi H."/>
            <person name="Masuho Y."/>
            <person name="Yamashita R."/>
            <person name="Nakai K."/>
            <person name="Yada T."/>
            <person name="Nakamura Y."/>
            <person name="Ohara O."/>
            <person name="Isogai T."/>
            <person name="Sugano S."/>
        </authorList>
    </citation>
    <scope>NUCLEOTIDE SEQUENCE [LARGE SCALE MRNA]</scope>
    <source>
        <tissue>Testis</tissue>
    </source>
</reference>
<reference key="4">
    <citation type="journal article" date="2006" name="Nature">
        <title>The DNA sequence and biological annotation of human chromosome 1.</title>
        <authorList>
            <person name="Gregory S.G."/>
            <person name="Barlow K.F."/>
            <person name="McLay K.E."/>
            <person name="Kaul R."/>
            <person name="Swarbreck D."/>
            <person name="Dunham A."/>
            <person name="Scott C.E."/>
            <person name="Howe K.L."/>
            <person name="Woodfine K."/>
            <person name="Spencer C.C.A."/>
            <person name="Jones M.C."/>
            <person name="Gillson C."/>
            <person name="Searle S."/>
            <person name="Zhou Y."/>
            <person name="Kokocinski F."/>
            <person name="McDonald L."/>
            <person name="Evans R."/>
            <person name="Phillips K."/>
            <person name="Atkinson A."/>
            <person name="Cooper R."/>
            <person name="Jones C."/>
            <person name="Hall R.E."/>
            <person name="Andrews T.D."/>
            <person name="Lloyd C."/>
            <person name="Ainscough R."/>
            <person name="Almeida J.P."/>
            <person name="Ambrose K.D."/>
            <person name="Anderson F."/>
            <person name="Andrew R.W."/>
            <person name="Ashwell R.I.S."/>
            <person name="Aubin K."/>
            <person name="Babbage A.K."/>
            <person name="Bagguley C.L."/>
            <person name="Bailey J."/>
            <person name="Beasley H."/>
            <person name="Bethel G."/>
            <person name="Bird C.P."/>
            <person name="Bray-Allen S."/>
            <person name="Brown J.Y."/>
            <person name="Brown A.J."/>
            <person name="Buckley D."/>
            <person name="Burton J."/>
            <person name="Bye J."/>
            <person name="Carder C."/>
            <person name="Chapman J.C."/>
            <person name="Clark S.Y."/>
            <person name="Clarke G."/>
            <person name="Clee C."/>
            <person name="Cobley V."/>
            <person name="Collier R.E."/>
            <person name="Corby N."/>
            <person name="Coville G.J."/>
            <person name="Davies J."/>
            <person name="Deadman R."/>
            <person name="Dunn M."/>
            <person name="Earthrowl M."/>
            <person name="Ellington A.G."/>
            <person name="Errington H."/>
            <person name="Frankish A."/>
            <person name="Frankland J."/>
            <person name="French L."/>
            <person name="Garner P."/>
            <person name="Garnett J."/>
            <person name="Gay L."/>
            <person name="Ghori M.R.J."/>
            <person name="Gibson R."/>
            <person name="Gilby L.M."/>
            <person name="Gillett W."/>
            <person name="Glithero R.J."/>
            <person name="Grafham D.V."/>
            <person name="Griffiths C."/>
            <person name="Griffiths-Jones S."/>
            <person name="Grocock R."/>
            <person name="Hammond S."/>
            <person name="Harrison E.S.I."/>
            <person name="Hart E."/>
            <person name="Haugen E."/>
            <person name="Heath P.D."/>
            <person name="Holmes S."/>
            <person name="Holt K."/>
            <person name="Howden P.J."/>
            <person name="Hunt A.R."/>
            <person name="Hunt S.E."/>
            <person name="Hunter G."/>
            <person name="Isherwood J."/>
            <person name="James R."/>
            <person name="Johnson C."/>
            <person name="Johnson D."/>
            <person name="Joy A."/>
            <person name="Kay M."/>
            <person name="Kershaw J.K."/>
            <person name="Kibukawa M."/>
            <person name="Kimberley A.M."/>
            <person name="King A."/>
            <person name="Knights A.J."/>
            <person name="Lad H."/>
            <person name="Laird G."/>
            <person name="Lawlor S."/>
            <person name="Leongamornlert D.A."/>
            <person name="Lloyd D.M."/>
            <person name="Loveland J."/>
            <person name="Lovell J."/>
            <person name="Lush M.J."/>
            <person name="Lyne R."/>
            <person name="Martin S."/>
            <person name="Mashreghi-Mohammadi M."/>
            <person name="Matthews L."/>
            <person name="Matthews N.S.W."/>
            <person name="McLaren S."/>
            <person name="Milne S."/>
            <person name="Mistry S."/>
            <person name="Moore M.J.F."/>
            <person name="Nickerson T."/>
            <person name="O'Dell C.N."/>
            <person name="Oliver K."/>
            <person name="Palmeiri A."/>
            <person name="Palmer S.A."/>
            <person name="Parker A."/>
            <person name="Patel D."/>
            <person name="Pearce A.V."/>
            <person name="Peck A.I."/>
            <person name="Pelan S."/>
            <person name="Phelps K."/>
            <person name="Phillimore B.J."/>
            <person name="Plumb R."/>
            <person name="Rajan J."/>
            <person name="Raymond C."/>
            <person name="Rouse G."/>
            <person name="Saenphimmachak C."/>
            <person name="Sehra H.K."/>
            <person name="Sheridan E."/>
            <person name="Shownkeen R."/>
            <person name="Sims S."/>
            <person name="Skuce C.D."/>
            <person name="Smith M."/>
            <person name="Steward C."/>
            <person name="Subramanian S."/>
            <person name="Sycamore N."/>
            <person name="Tracey A."/>
            <person name="Tromans A."/>
            <person name="Van Helmond Z."/>
            <person name="Wall M."/>
            <person name="Wallis J.M."/>
            <person name="White S."/>
            <person name="Whitehead S.L."/>
            <person name="Wilkinson J.E."/>
            <person name="Willey D.L."/>
            <person name="Williams H."/>
            <person name="Wilming L."/>
            <person name="Wray P.W."/>
            <person name="Wu Z."/>
            <person name="Coulson A."/>
            <person name="Vaudin M."/>
            <person name="Sulston J.E."/>
            <person name="Durbin R.M."/>
            <person name="Hubbard T."/>
            <person name="Wooster R."/>
            <person name="Dunham I."/>
            <person name="Carter N.P."/>
            <person name="McVean G."/>
            <person name="Ross M.T."/>
            <person name="Harrow J."/>
            <person name="Olson M.V."/>
            <person name="Beck S."/>
            <person name="Rogers J."/>
            <person name="Bentley D.R."/>
        </authorList>
    </citation>
    <scope>NUCLEOTIDE SEQUENCE [LARGE SCALE GENOMIC DNA]</scope>
</reference>
<reference key="5">
    <citation type="submission" date="2005-07" db="EMBL/GenBank/DDBJ databases">
        <authorList>
            <person name="Mural R.J."/>
            <person name="Istrail S."/>
            <person name="Sutton G.G."/>
            <person name="Florea L."/>
            <person name="Halpern A.L."/>
            <person name="Mobarry C.M."/>
            <person name="Lippert R."/>
            <person name="Walenz B."/>
            <person name="Shatkay H."/>
            <person name="Dew I."/>
            <person name="Miller J.R."/>
            <person name="Flanigan M.J."/>
            <person name="Edwards N.J."/>
            <person name="Bolanos R."/>
            <person name="Fasulo D."/>
            <person name="Halldorsson B.V."/>
            <person name="Hannenhalli S."/>
            <person name="Turner R."/>
            <person name="Yooseph S."/>
            <person name="Lu F."/>
            <person name="Nusskern D.R."/>
            <person name="Shue B.C."/>
            <person name="Zheng X.H."/>
            <person name="Zhong F."/>
            <person name="Delcher A.L."/>
            <person name="Huson D.H."/>
            <person name="Kravitz S.A."/>
            <person name="Mouchard L."/>
            <person name="Reinert K."/>
            <person name="Remington K.A."/>
            <person name="Clark A.G."/>
            <person name="Waterman M.S."/>
            <person name="Eichler E.E."/>
            <person name="Adams M.D."/>
            <person name="Hunkapiller M.W."/>
            <person name="Myers E.W."/>
            <person name="Venter J.C."/>
        </authorList>
    </citation>
    <scope>NUCLEOTIDE SEQUENCE [LARGE SCALE GENOMIC DNA]</scope>
</reference>
<reference key="6">
    <citation type="journal article" date="2004" name="Genome Res.">
        <title>The status, quality, and expansion of the NIH full-length cDNA project: the Mammalian Gene Collection (MGC).</title>
        <authorList>
            <consortium name="The MGC Project Team"/>
        </authorList>
    </citation>
    <scope>NUCLEOTIDE SEQUENCE [LARGE SCALE MRNA]</scope>
    <source>
        <tissue>Brain</tissue>
        <tissue>Placenta</tissue>
    </source>
</reference>
<reference key="7">
    <citation type="journal article" date="2007" name="Science">
        <title>ATM and ATR substrate analysis reveals extensive protein networks responsive to DNA damage.</title>
        <authorList>
            <person name="Matsuoka S."/>
            <person name="Ballif B.A."/>
            <person name="Smogorzewska A."/>
            <person name="McDonald E.R. III"/>
            <person name="Hurov K.E."/>
            <person name="Luo J."/>
            <person name="Bakalarski C.E."/>
            <person name="Zhao Z."/>
            <person name="Solimini N."/>
            <person name="Lerenthal Y."/>
            <person name="Shiloh Y."/>
            <person name="Gygi S.P."/>
            <person name="Elledge S.J."/>
        </authorList>
    </citation>
    <scope>PHOSPHORYLATION [LARGE SCALE ANALYSIS] AT SER-241</scope>
    <scope>IDENTIFICATION BY MASS SPECTROMETRY [LARGE SCALE ANALYSIS]</scope>
    <source>
        <tissue>Embryonic kidney</tissue>
    </source>
</reference>
<reference key="8">
    <citation type="journal article" date="2009" name="Anal. Chem.">
        <title>Lys-N and trypsin cover complementary parts of the phosphoproteome in a refined SCX-based approach.</title>
        <authorList>
            <person name="Gauci S."/>
            <person name="Helbig A.O."/>
            <person name="Slijper M."/>
            <person name="Krijgsveld J."/>
            <person name="Heck A.J."/>
            <person name="Mohammed S."/>
        </authorList>
    </citation>
    <scope>ACETYLATION [LARGE SCALE ANALYSIS] AT MET-1</scope>
    <scope>IDENTIFICATION BY MASS SPECTROMETRY [LARGE SCALE ANALYSIS]</scope>
</reference>
<reference key="9">
    <citation type="journal article" date="2009" name="Circ. Res.">
        <title>Noncanonical activity of seryl-tRNA synthetase is involved in vascular development.</title>
        <authorList>
            <person name="Fukui H."/>
            <person name="Hanaoka R."/>
            <person name="Kawahara A."/>
        </authorList>
    </citation>
    <scope>FUNCTION</scope>
</reference>
<reference key="10">
    <citation type="journal article" date="2009" name="Circ. Res.">
        <title>Genetic evidence for a noncanonical function of seryl-tRNA synthetase in vascular development.</title>
        <authorList>
            <person name="Herzog W."/>
            <person name="Mueller K."/>
            <person name="Huisken J."/>
            <person name="Stainier D.Y."/>
        </authorList>
    </citation>
    <scope>FUNCTION</scope>
</reference>
<reference key="11">
    <citation type="journal article" date="2009" name="Science">
        <title>Lysine acetylation targets protein complexes and co-regulates major cellular functions.</title>
        <authorList>
            <person name="Choudhary C."/>
            <person name="Kumar C."/>
            <person name="Gnad F."/>
            <person name="Nielsen M.L."/>
            <person name="Rehman M."/>
            <person name="Walther T.C."/>
            <person name="Olsen J.V."/>
            <person name="Mann M."/>
        </authorList>
    </citation>
    <scope>ACETYLATION [LARGE SCALE ANALYSIS] AT LYS-323</scope>
    <scope>IDENTIFICATION BY MASS SPECTROMETRY [LARGE SCALE ANALYSIS]</scope>
</reference>
<reference key="12">
    <citation type="journal article" date="2011" name="BMC Syst. Biol.">
        <title>Initial characterization of the human central proteome.</title>
        <authorList>
            <person name="Burkard T.R."/>
            <person name="Planyavsky M."/>
            <person name="Kaupe I."/>
            <person name="Breitwieser F.P."/>
            <person name="Buerckstuemmer T."/>
            <person name="Bennett K.L."/>
            <person name="Superti-Furga G."/>
            <person name="Colinge J."/>
        </authorList>
    </citation>
    <scope>IDENTIFICATION BY MASS SPECTROMETRY [LARGE SCALE ANALYSIS]</scope>
</reference>
<reference key="13">
    <citation type="journal article" date="2012" name="Proc. Natl. Acad. Sci. U.S.A.">
        <title>N-terminal acetylome analyses and functional insights of the N-terminal acetyltransferase NatB.</title>
        <authorList>
            <person name="Van Damme P."/>
            <person name="Lasa M."/>
            <person name="Polevoda B."/>
            <person name="Gazquez C."/>
            <person name="Elosegui-Artola A."/>
            <person name="Kim D.S."/>
            <person name="De Juan-Pardo E."/>
            <person name="Demeyer K."/>
            <person name="Hole K."/>
            <person name="Larrea E."/>
            <person name="Timmerman E."/>
            <person name="Prieto J."/>
            <person name="Arnesen T."/>
            <person name="Sherman F."/>
            <person name="Gevaert K."/>
            <person name="Aldabe R."/>
        </authorList>
    </citation>
    <scope>IDENTIFICATION BY MASS SPECTROMETRY [LARGE SCALE ANALYSIS]</scope>
</reference>
<reference key="14">
    <citation type="journal article" date="2014" name="Elife">
        <title>tRNA synthetase counteracts c-Myc to develop functional vasculature.</title>
        <authorList>
            <person name="Shi Y."/>
            <person name="Xu X."/>
            <person name="Zhang Q."/>
            <person name="Fu G."/>
            <person name="Mo Z."/>
            <person name="Wang G.S."/>
            <person name="Kishi S."/>
            <person name="Yang X.L."/>
        </authorList>
    </citation>
    <scope>FUNCTION</scope>
    <scope>DNA BINDING</scope>
    <scope>INTERACTION WITH SIRT2</scope>
    <scope>MUTAGENESIS OF 2-VAL--GLY-14; 75-GLY--ASN-97; 254-GLY--SER-261 AND 413-THR--VAL-420</scope>
</reference>
<reference key="15">
    <citation type="journal article" date="2014" name="J. Proteomics">
        <title>An enzyme assisted RP-RPLC approach for in-depth analysis of human liver phosphoproteome.</title>
        <authorList>
            <person name="Bian Y."/>
            <person name="Song C."/>
            <person name="Cheng K."/>
            <person name="Dong M."/>
            <person name="Wang F."/>
            <person name="Huang J."/>
            <person name="Sun D."/>
            <person name="Wang L."/>
            <person name="Ye M."/>
            <person name="Zou H."/>
        </authorList>
    </citation>
    <scope>IDENTIFICATION BY MASS SPECTROMETRY [LARGE SCALE ANALYSIS]</scope>
    <source>
        <tissue>Liver</tissue>
    </source>
</reference>
<reference key="16">
    <citation type="journal article" date="2017" name="J. Biol. Chem.">
        <title>Three distinct 3-methylcytidine (m3C) methyltransferases modify tRNA and mRNA in mice and humans.</title>
        <authorList>
            <person name="Xu L."/>
            <person name="Liu X."/>
            <person name="Sheng N."/>
            <person name="Oo K.S."/>
            <person name="Liang J."/>
            <person name="Chionh Y.H."/>
            <person name="Xu J."/>
            <person name="Ye F."/>
            <person name="Gao Y.G."/>
            <person name="Dedon P.C."/>
            <person name="Fu X.Y."/>
        </authorList>
    </citation>
    <scope>INTERACTION WITH METTL6</scope>
</reference>
<reference key="17">
    <citation type="journal article" date="2021" name="Nucleic Acids Res.">
        <title>Mutually exclusive substrate selection strategy by human m3C RNA transferases METTL2A and METTL6.</title>
        <authorList>
            <person name="Mao X.L."/>
            <person name="Li Z.H."/>
            <person name="Huang M.H."/>
            <person name="Wang J.T."/>
            <person name="Zhou J.B."/>
            <person name="Li Q.R."/>
            <person name="Xu H."/>
            <person name="Wang X.J."/>
            <person name="Zhou X.L."/>
        </authorList>
    </citation>
    <scope>INTERACTION WITH METTL6</scope>
</reference>
<reference evidence="19" key="18">
    <citation type="journal article" date="2012" name="Nat. Commun.">
        <title>Unique domain appended to vertebrate tRNA synthetase is essential for vascular development.</title>
        <authorList>
            <person name="Xu X."/>
            <person name="Shi Y."/>
            <person name="Zhang H.M."/>
            <person name="Swindell E.C."/>
            <person name="Marshall A.G."/>
            <person name="Guo M."/>
            <person name="Kishi S."/>
            <person name="Yang X.L."/>
        </authorList>
    </citation>
    <scope>X-RAY CRYSTALLOGRAPHY (2.89 ANGSTROMS)</scope>
    <scope>FUNCTION</scope>
    <scope>CATALYTIC ACTIVITY</scope>
    <scope>SUBUNIT</scope>
    <scope>SUBCELLULAR LOCATION</scope>
    <scope>MUTAGENESIS OF ASP-378; PHE-383; THR-429; 482-LYS--ALA-514; LYS-482; LYS-485 AND LYS-493</scope>
</reference>
<reference evidence="20" key="19">
    <citation type="journal article" date="2013" name="Structure">
        <title>Crystal structure of human Seryl-tRNA synthetase and Ser-SA complex reveals a molecular lever specific to higher eukaryotes.</title>
        <authorList>
            <person name="Xu X."/>
            <person name="Shi Y."/>
            <person name="Yang X.L."/>
        </authorList>
    </citation>
    <scope>X-RAY CRYSTALLOGRAPHY (2.90 ANGSTROMS) OF 2-477 IN COMPLEX WITH SERINE-ADENYLATE ANALOG</scope>
    <scope>FUNCTION</scope>
    <scope>CATALYTIC ACTIVITY</scope>
    <scope>MUTAGENESIS OF 75-GLY--ASN-97 AND 254-GLY--SER-261</scope>
</reference>
<reference evidence="21 22" key="20">
    <citation type="journal article" date="2015" name="Nucleic Acids Res.">
        <title>SerRS-tRNASec complex structures reveal mechanism of the first step in selenocysteine biosynthesis.</title>
        <authorList>
            <person name="Wang C."/>
            <person name="Guo Y."/>
            <person name="Tian Q."/>
            <person name="Jia Q."/>
            <person name="Gao Y."/>
            <person name="Zhang Q."/>
            <person name="Zhou C."/>
            <person name="Xie W."/>
        </authorList>
    </citation>
    <scope>X-RAY CRYSTALLOGRAPHY (3.50 ANGSTROMS) IN COMPLEX WITH SERINE; ATP ANALOG AND TRNA</scope>
    <scope>FUNCTION</scope>
    <scope>CATALYTIC ACTIVITY</scope>
    <scope>SUBUNIT</scope>
    <scope>MUTAGENESIS OF ARG-9; ARG-44; ASP-51; ASN-54; LYS-55; ASN-58; SER-61; LYS-104 AND ARG-107</scope>
</reference>
<reference key="21">
    <citation type="journal article" date="2017" name="Hum. Mutat.">
        <title>Mutations of the aminoacyl-tRNA-synthetases SARS and WARS2 are implicated in the aetiology of autosomal recessive intellectual disability.</title>
        <authorList>
            <person name="Musante L."/>
            <person name="Puettmann L."/>
            <person name="Kahrizi K."/>
            <person name="Garshasbi M."/>
            <person name="Hu H."/>
            <person name="Stehr H."/>
            <person name="Lipkowitz B."/>
            <person name="Otto S."/>
            <person name="Jensen L.R."/>
            <person name="Tzschach A."/>
            <person name="Jamali P."/>
            <person name="Wienker T."/>
            <person name="Najmabadi H."/>
            <person name="Ropers H.H."/>
            <person name="Kuss A.W."/>
        </authorList>
    </citation>
    <scope>VARIANT NEDMAS ASN-172</scope>
    <scope>CHARACTERIZATION OF VARIANT NEDMAS ASN-172</scope>
    <scope>INVOLVEMENT IN NEDMAS</scope>
    <scope>FUNCTION</scope>
    <scope>CATALYTIC ACTIVITY</scope>
    <scope>SUBCELLULAR LOCATION</scope>
    <scope>TISSUE SPECIFICITY</scope>
    <scope>MUTAGENESIS OF THR-429</scope>
</reference>
<reference key="22">
    <citation type="journal article" date="2021" name="Hum. Mutat.">
        <title>A bi-allelic loss-of-function SARS1 variant in children with neurodevelopmental delay, deafness, cardiomyopathy, and decompensation during fever.</title>
        <authorList>
            <person name="Ravel J.M."/>
            <person name="Dreumont N."/>
            <person name="Mosca P."/>
            <person name="Smith D.E.C."/>
            <person name="Mendes M.I."/>
            <person name="Wiedemann A."/>
            <person name="Coelho D."/>
            <person name="Schmitt E."/>
            <person name="Riviere J.B."/>
            <person name="Tran Mau-Them F."/>
            <person name="Thevenon J."/>
            <person name="Kuentz P."/>
            <person name="Polivka M."/>
            <person name="Fuchs S.A."/>
            <person name="Kok G."/>
            <person name="Thauvin-Robinet C."/>
            <person name="Gueant J.L."/>
            <person name="Salomons G.S."/>
            <person name="Faivre L."/>
            <person name="Feillet F."/>
        </authorList>
    </citation>
    <scope>VARIANT NEDMAS LEU-213</scope>
    <scope>CHARACTERIZATION OF VARIANT NEDMAS LEU-213</scope>
    <scope>FUNCTION</scope>
    <scope>CATALYTIC ACTIVITY</scope>
    <scope>SUBCELLULAR LOCATION</scope>
</reference>
<reference key="23">
    <citation type="journal article" date="2022" name="Hum. Mutat.">
        <title>WARS1 and SARS1: Two tRNA synthetases implicated in autosomal recessive microcephaly.</title>
        <authorList>
            <person name="Boegershausen N."/>
            <person name="Krawczyk H.E."/>
            <person name="Jamra R.A."/>
            <person name="Lin S.J."/>
            <person name="Yigit G."/>
            <person name="Huening I."/>
            <person name="Polo A.M."/>
            <person name="Vona B."/>
            <person name="Huang K."/>
            <person name="Schmidt J."/>
            <person name="Altmueller J."/>
            <person name="Luppe J."/>
            <person name="Platzer K."/>
            <person name="Doergeloh B.B."/>
            <person name="Busche A."/>
            <person name="Biskup S."/>
            <person name="Mendes M.I."/>
            <person name="Smith D.E.C."/>
            <person name="Salomons G.S."/>
            <person name="Zibat A."/>
            <person name="Bueltmann E."/>
            <person name="Nuernberg P."/>
            <person name="Spielmann M."/>
            <person name="Lemke J.R."/>
            <person name="Li Y."/>
            <person name="Zenker M."/>
            <person name="Varshney G.K."/>
            <person name="Hillen H.S."/>
            <person name="Kratz C.P."/>
            <person name="Wollnik B."/>
        </authorList>
    </citation>
    <scope>VARIANTS NEDMAS CYS-302 AND CYS-390</scope>
</reference>
<reference key="24">
    <citation type="journal article" date="2022" name="J. Med. Genet.">
        <title>Loss of seryl-tRNA synthetase (SARS1) causes complex spastic paraplegia and cellular senescence.</title>
        <authorList>
            <person name="Verdura E."/>
            <person name="Senger B."/>
            <person name="Raspall-Chaure M."/>
            <person name="Schlueter A."/>
            <person name="Launay N."/>
            <person name="Ruiz M."/>
            <person name="Casasnovas C."/>
            <person name="Rodriguez-Palmero A."/>
            <person name="Macaya A."/>
            <person name="Becker H.D."/>
            <person name="Pujol A."/>
        </authorList>
    </citation>
    <scope>FUNCTION</scope>
    <scope>CATALYTIC ACTIVITY</scope>
    <scope>SUBCELLULAR LOCATION</scope>
    <scope>INVOLVEMENT IN COMPLEX SPASTIC PARAPLEGIA</scope>
</reference>
<dbReference type="EC" id="6.1.1.11" evidence="4 5 7 8 14 16 17"/>
<dbReference type="EMBL" id="X91257">
    <property type="protein sequence ID" value="CAA62635.1"/>
    <property type="molecule type" value="mRNA"/>
</dbReference>
<dbReference type="EMBL" id="D49914">
    <property type="protein sequence ID" value="BAA95602.1"/>
    <property type="molecule type" value="mRNA"/>
</dbReference>
<dbReference type="EMBL" id="AK312771">
    <property type="protein sequence ID" value="BAG35636.1"/>
    <property type="molecule type" value="mRNA"/>
</dbReference>
<dbReference type="EMBL" id="AL356389">
    <property type="status" value="NOT_ANNOTATED_CDS"/>
    <property type="molecule type" value="Genomic_DNA"/>
</dbReference>
<dbReference type="EMBL" id="CH471122">
    <property type="protein sequence ID" value="EAW56369.1"/>
    <property type="molecule type" value="Genomic_DNA"/>
</dbReference>
<dbReference type="EMBL" id="BC000716">
    <property type="protein sequence ID" value="AAH00716.1"/>
    <property type="molecule type" value="mRNA"/>
</dbReference>
<dbReference type="EMBL" id="BC009390">
    <property type="protein sequence ID" value="AAH09390.1"/>
    <property type="molecule type" value="mRNA"/>
</dbReference>
<dbReference type="CCDS" id="CCDS795.1"/>
<dbReference type="PIR" id="G01026">
    <property type="entry name" value="G01026"/>
</dbReference>
<dbReference type="RefSeq" id="NP_006504.2">
    <property type="nucleotide sequence ID" value="NM_006513.3"/>
</dbReference>
<dbReference type="PDB" id="3VBB">
    <property type="method" value="X-ray"/>
    <property type="resolution" value="2.89 A"/>
    <property type="chains" value="A/B/C/D/E/F=1-514"/>
</dbReference>
<dbReference type="PDB" id="4L87">
    <property type="method" value="X-ray"/>
    <property type="resolution" value="2.90 A"/>
    <property type="chains" value="A=2-477"/>
</dbReference>
<dbReference type="PDB" id="4RQE">
    <property type="method" value="X-ray"/>
    <property type="resolution" value="4.00 A"/>
    <property type="chains" value="A/C=1-514"/>
</dbReference>
<dbReference type="PDB" id="4RQF">
    <property type="method" value="X-ray"/>
    <property type="resolution" value="3.50 A"/>
    <property type="chains" value="A/B=1-514"/>
</dbReference>
<dbReference type="PDB" id="8P7B">
    <property type="method" value="EM"/>
    <property type="resolution" value="2.42 A"/>
    <property type="chains" value="B/D=1-514"/>
</dbReference>
<dbReference type="PDB" id="8P7C">
    <property type="method" value="EM"/>
    <property type="resolution" value="3.70 A"/>
    <property type="chains" value="B/D=1-514"/>
</dbReference>
<dbReference type="PDB" id="8P7D">
    <property type="method" value="EM"/>
    <property type="resolution" value="4.20 A"/>
    <property type="chains" value="B/D=1-514"/>
</dbReference>
<dbReference type="PDBsum" id="3VBB"/>
<dbReference type="PDBsum" id="4L87"/>
<dbReference type="PDBsum" id="4RQE"/>
<dbReference type="PDBsum" id="4RQF"/>
<dbReference type="PDBsum" id="8P7B"/>
<dbReference type="PDBsum" id="8P7C"/>
<dbReference type="PDBsum" id="8P7D"/>
<dbReference type="EMDB" id="EMD-17528"/>
<dbReference type="EMDB" id="EMD-17529"/>
<dbReference type="EMDB" id="EMD-17530"/>
<dbReference type="EMDB" id="EMD-17531"/>
<dbReference type="SMR" id="P49591"/>
<dbReference type="BioGRID" id="112208">
    <property type="interactions" value="129"/>
</dbReference>
<dbReference type="DIP" id="DIP-38215N"/>
<dbReference type="FunCoup" id="P49591">
    <property type="interactions" value="2453"/>
</dbReference>
<dbReference type="IntAct" id="P49591">
    <property type="interactions" value="59"/>
</dbReference>
<dbReference type="MINT" id="P49591"/>
<dbReference type="STRING" id="9606.ENSP00000358939"/>
<dbReference type="BindingDB" id="P49591"/>
<dbReference type="ChEMBL" id="CHEMBL4523232"/>
<dbReference type="DrugBank" id="DB00133">
    <property type="generic name" value="Serine"/>
</dbReference>
<dbReference type="GlyConnect" id="1738">
    <property type="glycosylation" value="4 N-Linked glycans (1 site)"/>
</dbReference>
<dbReference type="GlyCosmos" id="P49591">
    <property type="glycosylation" value="1 site, 4 glycans"/>
</dbReference>
<dbReference type="GlyGen" id="P49591">
    <property type="glycosylation" value="2 sites, 4 N-linked glycans (1 site), 1 O-linked glycan (1 site)"/>
</dbReference>
<dbReference type="iPTMnet" id="P49591"/>
<dbReference type="MetOSite" id="P49591"/>
<dbReference type="PhosphoSitePlus" id="P49591"/>
<dbReference type="SwissPalm" id="P49591"/>
<dbReference type="BioMuta" id="SARS"/>
<dbReference type="DMDM" id="19860217"/>
<dbReference type="CPTAC" id="CPTAC-438"/>
<dbReference type="CPTAC" id="CPTAC-439"/>
<dbReference type="jPOST" id="P49591"/>
<dbReference type="MassIVE" id="P49591"/>
<dbReference type="PaxDb" id="9606-ENSP00000234677"/>
<dbReference type="PeptideAtlas" id="P49591"/>
<dbReference type="ProteomicsDB" id="56027"/>
<dbReference type="Pumba" id="P49591"/>
<dbReference type="ABCD" id="P49591">
    <property type="antibodies" value="3 sequenced antibodies"/>
</dbReference>
<dbReference type="Antibodypedia" id="1608">
    <property type="antibodies" value="244 antibodies from 30 providers"/>
</dbReference>
<dbReference type="DNASU" id="6301"/>
<dbReference type="Ensembl" id="ENST00000234677.7">
    <property type="protein sequence ID" value="ENSP00000234677.2"/>
    <property type="gene ID" value="ENSG00000031698.13"/>
</dbReference>
<dbReference type="GeneID" id="6301"/>
<dbReference type="KEGG" id="hsa:6301"/>
<dbReference type="MANE-Select" id="ENST00000234677.7">
    <property type="protein sequence ID" value="ENSP00000234677.2"/>
    <property type="RefSeq nucleotide sequence ID" value="NM_006513.4"/>
    <property type="RefSeq protein sequence ID" value="NP_006504.2"/>
</dbReference>
<dbReference type="UCSC" id="uc001dwu.3">
    <property type="organism name" value="human"/>
</dbReference>
<dbReference type="AGR" id="HGNC:10537"/>
<dbReference type="CTD" id="6301"/>
<dbReference type="DisGeNET" id="6301"/>
<dbReference type="GeneCards" id="SARS1"/>
<dbReference type="HGNC" id="HGNC:10537">
    <property type="gene designation" value="SARS1"/>
</dbReference>
<dbReference type="HPA" id="ENSG00000031698">
    <property type="expression patterns" value="Low tissue specificity"/>
</dbReference>
<dbReference type="MalaCards" id="SARS1"/>
<dbReference type="MIM" id="607529">
    <property type="type" value="gene"/>
</dbReference>
<dbReference type="MIM" id="617709">
    <property type="type" value="phenotype"/>
</dbReference>
<dbReference type="neXtProt" id="NX_P49591"/>
<dbReference type="OpenTargets" id="ENSG00000031698"/>
<dbReference type="Orphanet" id="88616">
    <property type="disease" value="Autosomal recessive non-syndromic intellectual disability"/>
</dbReference>
<dbReference type="Orphanet" id="2512">
    <property type="disease" value="Autosomal recessive primary microcephaly"/>
</dbReference>
<dbReference type="PharmGKB" id="PA34945"/>
<dbReference type="VEuPathDB" id="HostDB:ENSG00000031698"/>
<dbReference type="eggNOG" id="KOG2509">
    <property type="taxonomic scope" value="Eukaryota"/>
</dbReference>
<dbReference type="GeneTree" id="ENSGT00940000153792"/>
<dbReference type="HOGENOM" id="CLU_023797_0_0_1"/>
<dbReference type="InParanoid" id="P49591"/>
<dbReference type="OMA" id="GYTPCFR"/>
<dbReference type="OrthoDB" id="10264585at2759"/>
<dbReference type="PAN-GO" id="P49591">
    <property type="GO annotations" value="4 GO annotations based on evolutionary models"/>
</dbReference>
<dbReference type="PhylomeDB" id="P49591"/>
<dbReference type="TreeFam" id="TF300762"/>
<dbReference type="BRENDA" id="6.1.1.11">
    <property type="organism ID" value="2681"/>
</dbReference>
<dbReference type="PathwayCommons" id="P49591"/>
<dbReference type="Reactome" id="R-HSA-2408557">
    <property type="pathway name" value="Selenocysteine synthesis"/>
</dbReference>
<dbReference type="Reactome" id="R-HSA-379716">
    <property type="pathway name" value="Cytosolic tRNA aminoacylation"/>
</dbReference>
<dbReference type="SignaLink" id="P49591"/>
<dbReference type="SIGNOR" id="P49591"/>
<dbReference type="UniPathway" id="UPA00906">
    <property type="reaction ID" value="UER00895"/>
</dbReference>
<dbReference type="BioGRID-ORCS" id="6301">
    <property type="hits" value="841 hits in 1163 CRISPR screens"/>
</dbReference>
<dbReference type="CD-CODE" id="FB4E32DD">
    <property type="entry name" value="Presynaptic clusters and postsynaptic densities"/>
</dbReference>
<dbReference type="ChiTaRS" id="SARS">
    <property type="organism name" value="human"/>
</dbReference>
<dbReference type="EvolutionaryTrace" id="P49591"/>
<dbReference type="GeneWiki" id="SARS_(gene)"/>
<dbReference type="GenomeRNAi" id="6301"/>
<dbReference type="Pharos" id="P49591">
    <property type="development level" value="Tbio"/>
</dbReference>
<dbReference type="PRO" id="PR:P49591"/>
<dbReference type="Proteomes" id="UP000005640">
    <property type="component" value="Chromosome 1"/>
</dbReference>
<dbReference type="RNAct" id="P49591">
    <property type="molecule type" value="protein"/>
</dbReference>
<dbReference type="Bgee" id="ENSG00000031698">
    <property type="expression patterns" value="Expressed in islet of Langerhans and 205 other cell types or tissues"/>
</dbReference>
<dbReference type="ExpressionAtlas" id="P49591">
    <property type="expression patterns" value="baseline and differential"/>
</dbReference>
<dbReference type="GO" id="GO:0005737">
    <property type="term" value="C:cytoplasm"/>
    <property type="evidence" value="ECO:0000314"/>
    <property type="project" value="UniProtKB"/>
</dbReference>
<dbReference type="GO" id="GO:0005829">
    <property type="term" value="C:cytosol"/>
    <property type="evidence" value="ECO:0000314"/>
    <property type="project" value="UniProtKB"/>
</dbReference>
<dbReference type="GO" id="GO:0070062">
    <property type="term" value="C:extracellular exosome"/>
    <property type="evidence" value="ECO:0007005"/>
    <property type="project" value="UniProtKB"/>
</dbReference>
<dbReference type="GO" id="GO:0005634">
    <property type="term" value="C:nucleus"/>
    <property type="evidence" value="ECO:0000314"/>
    <property type="project" value="UniProtKB"/>
</dbReference>
<dbReference type="GO" id="GO:0005524">
    <property type="term" value="F:ATP binding"/>
    <property type="evidence" value="ECO:0007669"/>
    <property type="project" value="UniProtKB-KW"/>
</dbReference>
<dbReference type="GO" id="GO:0019899">
    <property type="term" value="F:enzyme binding"/>
    <property type="evidence" value="ECO:0000353"/>
    <property type="project" value="UniProtKB"/>
</dbReference>
<dbReference type="GO" id="GO:0060090">
    <property type="term" value="F:molecular adaptor activity"/>
    <property type="evidence" value="ECO:0000314"/>
    <property type="project" value="UniProt"/>
</dbReference>
<dbReference type="GO" id="GO:0042803">
    <property type="term" value="F:protein homodimerization activity"/>
    <property type="evidence" value="ECO:0000353"/>
    <property type="project" value="UniProtKB"/>
</dbReference>
<dbReference type="GO" id="GO:0000978">
    <property type="term" value="F:RNA polymerase II cis-regulatory region sequence-specific DNA binding"/>
    <property type="evidence" value="ECO:0000314"/>
    <property type="project" value="UniProtKB"/>
</dbReference>
<dbReference type="GO" id="GO:0098619">
    <property type="term" value="F:selenocysteine-tRNA ligase activity"/>
    <property type="evidence" value="ECO:0000315"/>
    <property type="project" value="UniProtKB"/>
</dbReference>
<dbReference type="GO" id="GO:0004828">
    <property type="term" value="F:serine-tRNA ligase activity"/>
    <property type="evidence" value="ECO:0000314"/>
    <property type="project" value="UniProtKB"/>
</dbReference>
<dbReference type="GO" id="GO:0000049">
    <property type="term" value="F:tRNA binding"/>
    <property type="evidence" value="ECO:0000318"/>
    <property type="project" value="GO_Central"/>
</dbReference>
<dbReference type="GO" id="GO:0002181">
    <property type="term" value="P:cytoplasmic translation"/>
    <property type="evidence" value="ECO:0000315"/>
    <property type="project" value="UniProtKB"/>
</dbReference>
<dbReference type="GO" id="GO:0016525">
    <property type="term" value="P:negative regulation of angiogenesis"/>
    <property type="evidence" value="ECO:0000315"/>
    <property type="project" value="UniProtKB"/>
</dbReference>
<dbReference type="GO" id="GO:0000122">
    <property type="term" value="P:negative regulation of transcription by RNA polymerase II"/>
    <property type="evidence" value="ECO:0000314"/>
    <property type="project" value="UniProtKB"/>
</dbReference>
<dbReference type="GO" id="GO:1904046">
    <property type="term" value="P:negative regulation of vascular endothelial growth factor production"/>
    <property type="evidence" value="ECO:0000314"/>
    <property type="project" value="UniProtKB"/>
</dbReference>
<dbReference type="GO" id="GO:0001514">
    <property type="term" value="P:selenocysteine incorporation"/>
    <property type="evidence" value="ECO:0000315"/>
    <property type="project" value="UniProtKB"/>
</dbReference>
<dbReference type="GO" id="GO:0006434">
    <property type="term" value="P:seryl-tRNA aminoacylation"/>
    <property type="evidence" value="ECO:0000314"/>
    <property type="project" value="UniProtKB"/>
</dbReference>
<dbReference type="GO" id="GO:0006412">
    <property type="term" value="P:translation"/>
    <property type="evidence" value="ECO:0000304"/>
    <property type="project" value="ProtInc"/>
</dbReference>
<dbReference type="GO" id="GO:0006400">
    <property type="term" value="P:tRNA modification"/>
    <property type="evidence" value="ECO:0000314"/>
    <property type="project" value="UniProt"/>
</dbReference>
<dbReference type="CDD" id="cd00770">
    <property type="entry name" value="SerRS_core"/>
    <property type="match status" value="1"/>
</dbReference>
<dbReference type="FunFam" id="1.10.287.40:FF:000002">
    <property type="entry name" value="Serine--tRNA ligase, cytoplasmic"/>
    <property type="match status" value="1"/>
</dbReference>
<dbReference type="FunFam" id="3.30.930.10:FF:000027">
    <property type="entry name" value="Serine--tRNA ligase, cytoplasmic"/>
    <property type="match status" value="1"/>
</dbReference>
<dbReference type="Gene3D" id="3.30.930.10">
    <property type="entry name" value="Bira Bifunctional Protein, Domain 2"/>
    <property type="match status" value="1"/>
</dbReference>
<dbReference type="Gene3D" id="1.10.287.40">
    <property type="entry name" value="Serine-tRNA synthetase, tRNA binding domain"/>
    <property type="match status" value="1"/>
</dbReference>
<dbReference type="InterPro" id="IPR002314">
    <property type="entry name" value="aa-tRNA-synt_IIb"/>
</dbReference>
<dbReference type="InterPro" id="IPR006195">
    <property type="entry name" value="aa-tRNA-synth_II"/>
</dbReference>
<dbReference type="InterPro" id="IPR045864">
    <property type="entry name" value="aa-tRNA-synth_II/BPL/LPL"/>
</dbReference>
<dbReference type="InterPro" id="IPR002317">
    <property type="entry name" value="Ser-tRNA-ligase_type_1"/>
</dbReference>
<dbReference type="InterPro" id="IPR015866">
    <property type="entry name" value="Ser-tRNA-synth_1_N"/>
</dbReference>
<dbReference type="InterPro" id="IPR042103">
    <property type="entry name" value="SerRS_1_N_sf"/>
</dbReference>
<dbReference type="InterPro" id="IPR033729">
    <property type="entry name" value="SerRS_core"/>
</dbReference>
<dbReference type="InterPro" id="IPR010978">
    <property type="entry name" value="tRNA-bd_arm"/>
</dbReference>
<dbReference type="NCBIfam" id="TIGR00414">
    <property type="entry name" value="serS"/>
    <property type="match status" value="1"/>
</dbReference>
<dbReference type="PANTHER" id="PTHR11778">
    <property type="entry name" value="SERYL-TRNA SYNTHETASE"/>
    <property type="match status" value="1"/>
</dbReference>
<dbReference type="Pfam" id="PF02403">
    <property type="entry name" value="Seryl_tRNA_N"/>
    <property type="match status" value="1"/>
</dbReference>
<dbReference type="Pfam" id="PF00587">
    <property type="entry name" value="tRNA-synt_2b"/>
    <property type="match status" value="1"/>
</dbReference>
<dbReference type="PIRSF" id="PIRSF001529">
    <property type="entry name" value="Ser-tRNA-synth_IIa"/>
    <property type="match status" value="1"/>
</dbReference>
<dbReference type="PRINTS" id="PR00981">
    <property type="entry name" value="TRNASYNTHSER"/>
</dbReference>
<dbReference type="SUPFAM" id="SSF55681">
    <property type="entry name" value="Class II aaRS and biotin synthetases"/>
    <property type="match status" value="1"/>
</dbReference>
<dbReference type="SUPFAM" id="SSF46589">
    <property type="entry name" value="tRNA-binding arm"/>
    <property type="match status" value="1"/>
</dbReference>
<dbReference type="PROSITE" id="PS50862">
    <property type="entry name" value="AA_TRNA_LIGASE_II"/>
    <property type="match status" value="1"/>
</dbReference>
<comment type="function">
    <text evidence="2 3 4 5 6 7 8 11 13 14">Catalyzes the attachment of serine to tRNA(Ser) in a two-step reaction: serine is first activated by ATP to form Ser-AMP and then transferred to the acceptor end of tRNA(Ser) (PubMed:22353712, PubMed:24095058, PubMed:26433229, PubMed:28236339, PubMed:34570399, PubMed:36041817, PubMed:9431993). Is probably also able to aminoacylate tRNA(Sec) with serine, to form the misacylated tRNA L-seryl-tRNA(Sec), which will be further converted into selenocysteinyl-tRNA(Sec) (PubMed:26433229, PubMed:28236339, PubMed:34570399, PubMed:9431993). In the nucleus, binds to the VEGFA core promoter and prevents MYC binding and transcriptional activation by MYC (PubMed:24940000). Recruits SIRT2 to the VEGFA promoter, promoting deacetylation of histone H4 at 'Lys-16' (H4K16). Thereby, inhibits the production of VEGFA and sprouting angiogenesis mediated by VEGFA (PubMed:19423847, PubMed:19423848, PubMed:24940000).</text>
</comment>
<comment type="catalytic activity">
    <reaction evidence="4 5 7 8 14 16 17">
        <text>tRNA(Ser) + L-serine + ATP = L-seryl-tRNA(Ser) + AMP + diphosphate + H(+)</text>
        <dbReference type="Rhea" id="RHEA:12292"/>
        <dbReference type="Rhea" id="RHEA-COMP:9669"/>
        <dbReference type="Rhea" id="RHEA-COMP:9703"/>
        <dbReference type="ChEBI" id="CHEBI:15378"/>
        <dbReference type="ChEBI" id="CHEBI:30616"/>
        <dbReference type="ChEBI" id="CHEBI:33019"/>
        <dbReference type="ChEBI" id="CHEBI:33384"/>
        <dbReference type="ChEBI" id="CHEBI:78442"/>
        <dbReference type="ChEBI" id="CHEBI:78533"/>
        <dbReference type="ChEBI" id="CHEBI:456215"/>
        <dbReference type="EC" id="6.1.1.11"/>
    </reaction>
</comment>
<comment type="catalytic activity">
    <reaction evidence="4 5 7 8 14 16">
        <text>tRNA(Sec) + L-serine + ATP = L-seryl-tRNA(Sec) + AMP + diphosphate + H(+)</text>
        <dbReference type="Rhea" id="RHEA:42580"/>
        <dbReference type="Rhea" id="RHEA-COMP:9742"/>
        <dbReference type="Rhea" id="RHEA-COMP:10128"/>
        <dbReference type="ChEBI" id="CHEBI:15378"/>
        <dbReference type="ChEBI" id="CHEBI:30616"/>
        <dbReference type="ChEBI" id="CHEBI:33019"/>
        <dbReference type="ChEBI" id="CHEBI:33384"/>
        <dbReference type="ChEBI" id="CHEBI:78442"/>
        <dbReference type="ChEBI" id="CHEBI:78533"/>
        <dbReference type="ChEBI" id="CHEBI:456215"/>
        <dbReference type="EC" id="6.1.1.11"/>
    </reaction>
</comment>
<comment type="pathway">
    <text>Aminoacyl-tRNA biosynthesis; selenocysteinyl-tRNA(Sec) biosynthesis; L-seryl-tRNA(Sec) from L-serine and tRNA(Sec): step 1/1.</text>
</comment>
<comment type="subunit">
    <text evidence="4 6 7 9 10">Homodimer (PubMed:22353712, PubMed:26433229). The tRNA molecule may bind across the dimer (PubMed:26433229). Interacts with SIRT2 (PubMed:24940000). Interacts with METTL6; interaction is required for the tRNA N(3)-methylcytidine methyltransferase activity of METTL6 (PubMed:28655767, PubMed:34268557).</text>
</comment>
<comment type="interaction">
    <interactant intactId="EBI-1053431">
        <id>P49591</id>
    </interactant>
    <interactant intactId="EBI-18899653">
        <id>Q6DHV7-2</id>
        <label>ADAL</label>
    </interactant>
    <organismsDiffer>false</organismsDiffer>
    <experiments>3</experiments>
</comment>
<comment type="interaction">
    <interactant intactId="EBI-1053431">
        <id>P49591</id>
    </interactant>
    <interactant intactId="EBI-2556852">
        <id>P09525</id>
        <label>ANXA4</label>
    </interactant>
    <organismsDiffer>false</organismsDiffer>
    <experiments>3</experiments>
</comment>
<comment type="interaction">
    <interactant intactId="EBI-1053431">
        <id>P49591</id>
    </interactant>
    <interactant intactId="EBI-9089489">
        <id>Q96FT7-4</id>
        <label>ASIC4</label>
    </interactant>
    <organismsDiffer>false</organismsDiffer>
    <experiments>3</experiments>
</comment>
<comment type="interaction">
    <interactant intactId="EBI-1053431">
        <id>P49591</id>
    </interactant>
    <interactant intactId="EBI-375077">
        <id>P38936</id>
        <label>CDKN1A</label>
    </interactant>
    <organismsDiffer>false</organismsDiffer>
    <experiments>3</experiments>
</comment>
<comment type="interaction">
    <interactant intactId="EBI-1053431">
        <id>P49591</id>
    </interactant>
    <interactant intactId="EBI-12950757">
        <id>Q9Y4F5-3</id>
        <label>CEP170B</label>
    </interactant>
    <organismsDiffer>false</organismsDiffer>
    <experiments>3</experiments>
</comment>
<comment type="interaction">
    <interactant intactId="EBI-1053431">
        <id>P49591</id>
    </interactant>
    <interactant intactId="EBI-372173">
        <id>O77932</id>
        <label>DXO</label>
    </interactant>
    <organismsDiffer>false</organismsDiffer>
    <experiments>3</experiments>
</comment>
<comment type="interaction">
    <interactant intactId="EBI-1053431">
        <id>P49591</id>
    </interactant>
    <interactant intactId="EBI-713382">
        <id>O43504</id>
        <label>LAMTOR5</label>
    </interactant>
    <organismsDiffer>false</organismsDiffer>
    <experiments>3</experiments>
</comment>
<comment type="interaction">
    <interactant intactId="EBI-1053431">
        <id>P49591</id>
    </interactant>
    <interactant intactId="EBI-1052558">
        <id>Q92615</id>
        <label>LARP4B</label>
    </interactant>
    <organismsDiffer>false</organismsDiffer>
    <experiments>3</experiments>
</comment>
<comment type="interaction">
    <interactant intactId="EBI-1053431">
        <id>P49591</id>
    </interactant>
    <interactant intactId="EBI-10174029">
        <id>A6NJ78-4</id>
        <label>METTL15</label>
    </interactant>
    <organismsDiffer>false</organismsDiffer>
    <experiments>3</experiments>
</comment>
<comment type="interaction">
    <interactant intactId="EBI-1053431">
        <id>P49591</id>
    </interactant>
    <interactant intactId="EBI-25852006">
        <id>Q8N2H9-4</id>
        <label>PELI3</label>
    </interactant>
    <organismsDiffer>false</organismsDiffer>
    <experiments>3</experiments>
</comment>
<comment type="interaction">
    <interactant intactId="EBI-1053431">
        <id>P49591</id>
    </interactant>
    <interactant intactId="EBI-2557276">
        <id>O15534</id>
        <label>PER1</label>
    </interactant>
    <organismsDiffer>false</organismsDiffer>
    <experiments>3</experiments>
</comment>
<comment type="interaction">
    <interactant intactId="EBI-1053431">
        <id>P49591</id>
    </interactant>
    <interactant intactId="EBI-712752">
        <id>Q14181</id>
        <label>POLA2</label>
    </interactant>
    <organismsDiffer>false</organismsDiffer>
    <experiments>3</experiments>
</comment>
<comment type="interaction">
    <interactant intactId="EBI-1053431">
        <id>P49591</id>
    </interactant>
    <interactant intactId="EBI-2803328">
        <id>P79522</id>
        <label>PRR3</label>
    </interactant>
    <organismsDiffer>false</organismsDiffer>
    <experiments>3</experiments>
</comment>
<comment type="interaction">
    <interactant intactId="EBI-1053431">
        <id>P49591</id>
    </interactant>
    <interactant intactId="EBI-438710">
        <id>Q9NS23-4</id>
        <label>RASSF1</label>
    </interactant>
    <organismsDiffer>false</organismsDiffer>
    <experiments>3</experiments>
</comment>
<comment type="interaction">
    <interactant intactId="EBI-1053431">
        <id>P49591</id>
    </interactant>
    <interactant intactId="EBI-1773811">
        <id>Q9NUC0</id>
        <label>SERTAD4</label>
    </interactant>
    <organismsDiffer>false</organismsDiffer>
    <experiments>3</experiments>
</comment>
<comment type="interaction">
    <interactant intactId="EBI-1053431">
        <id>P49591</id>
    </interactant>
    <interactant intactId="EBI-3929549">
        <id>O14544</id>
        <label>SOCS6</label>
    </interactant>
    <organismsDiffer>false</organismsDiffer>
    <experiments>3</experiments>
</comment>
<comment type="interaction">
    <interactant intactId="EBI-1053431">
        <id>P49591</id>
    </interactant>
    <interactant intactId="EBI-10696971">
        <id>Q7Z6I5</id>
        <label>SPATA12</label>
    </interactant>
    <organismsDiffer>false</organismsDiffer>
    <experiments>3</experiments>
</comment>
<comment type="interaction">
    <interactant intactId="EBI-1053431">
        <id>P49591</id>
    </interactant>
    <interactant intactId="EBI-3923692">
        <id>Q496A3</id>
        <label>SPATS1</label>
    </interactant>
    <organismsDiffer>false</organismsDiffer>
    <experiments>3</experiments>
</comment>
<comment type="interaction">
    <interactant intactId="EBI-1053431">
        <id>P49591</id>
    </interactant>
    <interactant intactId="EBI-310749">
        <id>Q9UH65</id>
        <label>SWAP70</label>
    </interactant>
    <organismsDiffer>false</organismsDiffer>
    <experiments>3</experiments>
</comment>
<comment type="interaction">
    <interactant intactId="EBI-1053431">
        <id>P49591</id>
    </interactant>
    <interactant intactId="EBI-9089028">
        <id>Q7Z7C8-2</id>
        <label>TAF8</label>
    </interactant>
    <organismsDiffer>false</organismsDiffer>
    <experiments>3</experiments>
</comment>
<comment type="interaction">
    <interactant intactId="EBI-1053431">
        <id>P49591</id>
    </interactant>
    <interactant intactId="EBI-25830583">
        <id>Q8N0U2</id>
        <label>TMEM61</label>
    </interactant>
    <organismsDiffer>false</organismsDiffer>
    <experiments>3</experiments>
</comment>
<comment type="interaction">
    <interactant intactId="EBI-1053431">
        <id>P49591</id>
    </interactant>
    <interactant intactId="EBI-10316321">
        <id>Q9NX94</id>
        <label>WBP1L</label>
    </interactant>
    <organismsDiffer>false</organismsDiffer>
    <experiments>3</experiments>
</comment>
<comment type="interaction">
    <interactant intactId="EBI-1053431">
        <id>P49591</id>
    </interactant>
    <interactant intactId="EBI-1965777">
        <id>Q9BRR0</id>
        <label>ZKSCAN3</label>
    </interactant>
    <organismsDiffer>false</organismsDiffer>
    <experiments>3</experiments>
</comment>
<comment type="interaction">
    <interactant intactId="EBI-1053431">
        <id>P49591</id>
    </interactant>
    <interactant intactId="EBI-16435478">
        <id>Q9BYN7-2</id>
        <label>ZNF341</label>
    </interactant>
    <organismsDiffer>false</organismsDiffer>
    <experiments>3</experiments>
</comment>
<comment type="subcellular location">
    <subcellularLocation>
        <location evidence="4 8 11 13">Cytoplasm</location>
    </subcellularLocation>
    <subcellularLocation>
        <location evidence="4 11 13">Nucleus</location>
    </subcellularLocation>
    <text evidence="4 11 13">Predominantly cytoplasmic, but a minor proportion is also found in the nucleus.</text>
</comment>
<comment type="tissue specificity">
    <text evidence="8">Brain.</text>
</comment>
<comment type="domain">
    <text evidence="7">Consists of two distinct domains, a catalytic core and a N-terminal extension that is involved in tRNA binding.</text>
</comment>
<comment type="disease" evidence="8 11 12">
    <disease id="DI-05110">
        <name>Neurodevelopmental disorder with microcephaly, ataxia, and seizures</name>
        <acronym>NEDMAS</acronym>
        <description>An autosomal recessive disorder characterized by delayed psychomotor development, intellectual disability, seizures apparent in infancy, impaired speech, and aggressive behavior. Additional features include microcephaly, ataxia, and muscle weakness.</description>
        <dbReference type="MIM" id="617709"/>
    </disease>
    <text>The disease is caused by variants affecting the gene represented in this entry.</text>
</comment>
<comment type="disease">
    <text evidence="13">A splice site deletion resulting in a five amino acid in-frame insertion in SARS1, is associated with autosomal dominant complex spastic paraplegia with ataxia, intellectual disability, developmental delay and seizures, but without microcephaly.</text>
</comment>
<comment type="similarity">
    <text evidence="15">Belongs to the class-II aminoacyl-tRNA synthetase family. Type-1 seryl-tRNA synthetase subfamily.</text>
</comment>
<sequence>MVLDLDLFRVDKGGDPALIRETQEKRFKDPGLVDQLVKADSEWRRCRFRADNLNKLKNLCSKTIGEKMKKKEPVGDDESVPENVLSFDDLTADALANLKVSQIKKVRLLIDEAILKCDAERIKLEAERFENLREIGNLLHPSVPISNDEDVDNKVERIWGDCTVRKKYSHVDLVVMVDGFEGEKGAVVAGSRGYFLKGVLVFLEQALIQYALRTLGSRGYIPIYTPFFMRKEVMQEVAQLSQFDEELYKVIGKGSEKSDDNSYDEKYLIATSEQPIAALHRDEWLRPEDLPIKYAGLSTCFRQEVGSHGRDTRGIFRVHQFEKIEQFVYSSPHDNKSWEMFEEMITTAEEFYQSLGIPYHIVNIVSGSLNHAASKKLDLEAWFPGSGAFRELVSCSNCTDYQARRLRIRYGQTKKMMDKVEFVHMLNATMCATTRTICAILENYQTEKGITVPEKLKEFMPPGLQELIPFVKPAPIEQEPSKKQKKQHEGSKKKAAARDVTLENRLQNMEVTDA</sequence>